<organismHost>
    <name type="scientific">Acidianus convivator</name>
    <dbReference type="NCBI Taxonomy" id="269667"/>
</organismHost>
<organism>
    <name type="scientific">Acidianus bottle-shaped virus (isolate Italy/Pozzuoli)</name>
    <name type="common">ABV</name>
    <dbReference type="NCBI Taxonomy" id="654911"/>
    <lineage>
        <taxon>Viruses</taxon>
        <taxon>Viruses incertae sedis</taxon>
        <taxon>Ampullaviridae</taxon>
        <taxon>Bottigliavirus</taxon>
        <taxon>Bottigliavirus ABV</taxon>
    </lineage>
</organism>
<feature type="chain" id="PRO_0000384859" description="Uncharacterized protein ORF158">
    <location>
        <begin position="1"/>
        <end position="158"/>
    </location>
</feature>
<protein>
    <recommendedName>
        <fullName>Uncharacterized protein ORF158</fullName>
    </recommendedName>
</protein>
<keyword id="KW-1185">Reference proteome</keyword>
<sequence length="158" mass="18762">MNKTLIGHLDVSSSNLNNLAYKIYSTIKGMIENFDMVDKRAIVYMLKTYKEAFEITLSDFEFVLNELPTEDKLYPYIDYLVENLKYGFDALDELIYIVDREFDERNDNFKNLIKETLSFLQDITYCVHNWIKELRDMLTNTNQTEEEENSNDSESEED</sequence>
<proteinExistence type="predicted"/>
<name>Y158_ABVP</name>
<dbReference type="EMBL" id="EF432053">
    <property type="protein sequence ID" value="ABP73441.1"/>
    <property type="molecule type" value="Genomic_DNA"/>
</dbReference>
<dbReference type="RefSeq" id="YP_001210355.1">
    <property type="nucleotide sequence ID" value="NC_009452.1"/>
</dbReference>
<dbReference type="SMR" id="A4ZUD7"/>
<dbReference type="GeneID" id="5129804"/>
<dbReference type="KEGG" id="vg:5129804"/>
<dbReference type="Proteomes" id="UP000000513">
    <property type="component" value="Segment"/>
</dbReference>
<reference key="1">
    <citation type="journal article" date="2007" name="Virology">
        <title>Genome of the Acidianus bottle-shaped virus and insights into the replication and packaging mechanisms.</title>
        <authorList>
            <person name="Peng X."/>
            <person name="Basta T."/>
            <person name="Haring M."/>
            <person name="Garrett R.A."/>
            <person name="Prangishvili D."/>
        </authorList>
    </citation>
    <scope>NUCLEOTIDE SEQUENCE [GENOMIC DNA]</scope>
</reference>
<accession>A4ZUD7</accession>
<gene>
    <name type="ORF">ORF158</name>
</gene>